<keyword id="KW-0963">Cytoplasm</keyword>
<keyword id="KW-0444">Lipid biosynthesis</keyword>
<keyword id="KW-0443">Lipid metabolism</keyword>
<keyword id="KW-0489">Methyltransferase</keyword>
<keyword id="KW-1185">Reference proteome</keyword>
<keyword id="KW-0949">S-adenosyl-L-methionine</keyword>
<keyword id="KW-0808">Transferase</keyword>
<evidence type="ECO:0000250" key="1"/>
<evidence type="ECO:0000305" key="2"/>
<organism>
    <name type="scientific">Mycobacterium bovis (strain ATCC BAA-935 / AF2122/97)</name>
    <dbReference type="NCBI Taxonomy" id="233413"/>
    <lineage>
        <taxon>Bacteria</taxon>
        <taxon>Bacillati</taxon>
        <taxon>Actinomycetota</taxon>
        <taxon>Actinomycetes</taxon>
        <taxon>Mycobacteriales</taxon>
        <taxon>Mycobacteriaceae</taxon>
        <taxon>Mycobacterium</taxon>
        <taxon>Mycobacterium tuberculosis complex</taxon>
    </lineage>
</organism>
<sequence length="302" mass="34660">MTSQGDTTSGTQLKPPVEAVRSHYDKSNEFFKLWLDPSMTYSCAYFERPDMTLEEAQYAKRKLALDKLNLEPGMTLLDIGCGWGSTMRHAVAEYDVNVIGLTLSENQYAHDKAMFDEVDSPRRKEVRIQGWEEFDEPVDRIVSLGAFEHFADGAGDAGFERYDTFFKKFYNLTPDDGRMLLHTITIPDKEEAQELGLTSPMSLLRFIKFILTEIFPGGRLPRISQVDYYSSNAGWKVERYHRIGANYVPTLNAWADALQAHKDEAIALKGQETYDIYMHYLRGCSDLFRDKYTDVCQFTLVK</sequence>
<feature type="chain" id="PRO_0000089567" description="Cyclopropane mycolic acid synthase 2">
    <location>
        <begin position="1"/>
        <end position="302"/>
    </location>
</feature>
<feature type="active site" evidence="1">
    <location>
        <position position="284"/>
    </location>
</feature>
<feature type="binding site" evidence="1">
    <location>
        <begin position="41"/>
        <end position="42"/>
    </location>
    <ligand>
        <name>S-adenosyl-L-methionine</name>
        <dbReference type="ChEBI" id="CHEBI:59789"/>
    </ligand>
</feature>
<feature type="binding site" evidence="1">
    <location>
        <begin position="76"/>
        <end position="84"/>
    </location>
    <ligand>
        <name>S-adenosyl-L-methionine</name>
        <dbReference type="ChEBI" id="CHEBI:59789"/>
    </ligand>
</feature>
<feature type="binding site" evidence="1">
    <location>
        <begin position="102"/>
        <end position="107"/>
    </location>
    <ligand>
        <name>S-adenosyl-L-methionine</name>
        <dbReference type="ChEBI" id="CHEBI:59789"/>
    </ligand>
</feature>
<feature type="binding site" evidence="1">
    <location>
        <begin position="131"/>
        <end position="132"/>
    </location>
    <ligand>
        <name>S-adenosyl-L-methionine</name>
        <dbReference type="ChEBI" id="CHEBI:59789"/>
    </ligand>
</feature>
<dbReference type="EC" id="2.1.1.79"/>
<dbReference type="EMBL" id="LT708304">
    <property type="protein sequence ID" value="SIT99111.1"/>
    <property type="molecule type" value="Genomic_DNA"/>
</dbReference>
<dbReference type="RefSeq" id="NP_854178.1">
    <property type="nucleotide sequence ID" value="NC_002945.3"/>
</dbReference>
<dbReference type="RefSeq" id="WP_003402621.1">
    <property type="nucleotide sequence ID" value="NC_002945.4"/>
</dbReference>
<dbReference type="SMR" id="P0A5P1"/>
<dbReference type="PATRIC" id="fig|233413.5.peg.561"/>
<dbReference type="UniPathway" id="UPA00915"/>
<dbReference type="Proteomes" id="UP000001419">
    <property type="component" value="Chromosome"/>
</dbReference>
<dbReference type="GO" id="GO:0005737">
    <property type="term" value="C:cytoplasm"/>
    <property type="evidence" value="ECO:0007669"/>
    <property type="project" value="UniProtKB-SubCell"/>
</dbReference>
<dbReference type="GO" id="GO:0008825">
    <property type="term" value="F:cyclopropane-fatty-acyl-phospholipid synthase activity"/>
    <property type="evidence" value="ECO:0007669"/>
    <property type="project" value="UniProtKB-EC"/>
</dbReference>
<dbReference type="GO" id="GO:0008610">
    <property type="term" value="P:lipid biosynthetic process"/>
    <property type="evidence" value="ECO:0007669"/>
    <property type="project" value="InterPro"/>
</dbReference>
<dbReference type="GO" id="GO:0032259">
    <property type="term" value="P:methylation"/>
    <property type="evidence" value="ECO:0007669"/>
    <property type="project" value="UniProtKB-KW"/>
</dbReference>
<dbReference type="CDD" id="cd02440">
    <property type="entry name" value="AdoMet_MTases"/>
    <property type="match status" value="1"/>
</dbReference>
<dbReference type="FunFam" id="3.40.50.150:FF:000115">
    <property type="entry name" value="Cyclopropane mycolic acid synthase 1"/>
    <property type="match status" value="1"/>
</dbReference>
<dbReference type="Gene3D" id="3.40.50.150">
    <property type="entry name" value="Vaccinia Virus protein VP39"/>
    <property type="match status" value="1"/>
</dbReference>
<dbReference type="InterPro" id="IPR050723">
    <property type="entry name" value="CFA/CMAS"/>
</dbReference>
<dbReference type="InterPro" id="IPR003333">
    <property type="entry name" value="CMAS"/>
</dbReference>
<dbReference type="InterPro" id="IPR047672">
    <property type="entry name" value="CMAS_actinobact"/>
</dbReference>
<dbReference type="InterPro" id="IPR029063">
    <property type="entry name" value="SAM-dependent_MTases_sf"/>
</dbReference>
<dbReference type="NCBIfam" id="NF040660">
    <property type="entry name" value="mycolic_MTase"/>
    <property type="match status" value="1"/>
</dbReference>
<dbReference type="PANTHER" id="PTHR43667">
    <property type="entry name" value="CYCLOPROPANE-FATTY-ACYL-PHOSPHOLIPID SYNTHASE"/>
    <property type="match status" value="1"/>
</dbReference>
<dbReference type="PANTHER" id="PTHR43667:SF1">
    <property type="entry name" value="CYCLOPROPANE-FATTY-ACYL-PHOSPHOLIPID SYNTHASE"/>
    <property type="match status" value="1"/>
</dbReference>
<dbReference type="Pfam" id="PF02353">
    <property type="entry name" value="CMAS"/>
    <property type="match status" value="1"/>
</dbReference>
<dbReference type="PIRSF" id="PIRSF003085">
    <property type="entry name" value="CMAS"/>
    <property type="match status" value="1"/>
</dbReference>
<dbReference type="SUPFAM" id="SSF53335">
    <property type="entry name" value="S-adenosyl-L-methionine-dependent methyltransferases"/>
    <property type="match status" value="1"/>
</dbReference>
<comment type="function">
    <text evidence="1">Catalyzes the formation of trans cyclopropanated ketomycolate or methoxymycolate through the conversion of a double bond to a cyclopropane ring at the proximal position of an oxygenated mycolic acid via the transfer of a methylene group from S-adenosyl-L-methionine. In the absence of MmaA2, CmaA2 has a non-specific cis-cyclopropanating activity and is able to catalyze the conversion of a double bond to a cis cyclopropane ring at the distal position of an alpha mycolic acid. Cyclopropanated mycolic acids are key factors participating in cell envelope permeability, host immunomodulation and persistence (By similarity).</text>
</comment>
<comment type="catalytic activity">
    <reaction>
        <text>a 1-acyl-2-(9Z)-enoyl-sn-glycero-3-phospholipid + S-adenosyl-L-methionine = a 1-acyl-2-(9-cyclopronane)-acyl-sn-glycero-3-phospholipid + S-adenosyl-L-homocysteine + H(+)</text>
        <dbReference type="Rhea" id="RHEA:11988"/>
        <dbReference type="ChEBI" id="CHEBI:15378"/>
        <dbReference type="ChEBI" id="CHEBI:57856"/>
        <dbReference type="ChEBI" id="CHEBI:59789"/>
        <dbReference type="ChEBI" id="CHEBI:76593"/>
        <dbReference type="ChEBI" id="CHEBI:76594"/>
        <dbReference type="EC" id="2.1.1.79"/>
    </reaction>
</comment>
<comment type="pathway">
    <text>Lipid metabolism; mycolic acid biosynthesis.</text>
</comment>
<comment type="subunit">
    <text evidence="1">Homodimer.</text>
</comment>
<comment type="subcellular location">
    <subcellularLocation>
        <location evidence="1">Cytoplasm</location>
    </subcellularLocation>
</comment>
<comment type="similarity">
    <text evidence="2">Belongs to the CFA/CMAS family.</text>
</comment>
<protein>
    <recommendedName>
        <fullName>Cyclopropane mycolic acid synthase 2</fullName>
        <shortName>CMAS</shortName>
        <ecNumber>2.1.1.79</ecNumber>
    </recommendedName>
    <alternativeName>
        <fullName>Cyclopropane-fatty-acyl-phospholipid synthase</fullName>
        <shortName>CFA synthase</shortName>
        <shortName>Cyclopropane fatty acid synthase</shortName>
    </alternativeName>
    <alternativeName>
        <fullName>Mycolic acid methyltransferase</fullName>
        <shortName>MA-MT</shortName>
    </alternativeName>
    <alternativeName>
        <fullName>S-adenosylmethionine-dependent methyltransferase</fullName>
        <shortName>AdoMet-MT</shortName>
        <shortName>SAM-MT</shortName>
    </alternativeName>
</protein>
<gene>
    <name type="primary">cmaA2</name>
    <name type="synonym">cma2</name>
    <name type="ordered locus">BQ2027_MB0515C</name>
</gene>
<reference key="1">
    <citation type="journal article" date="2003" name="Proc. Natl. Acad. Sci. U.S.A.">
        <title>The complete genome sequence of Mycobacterium bovis.</title>
        <authorList>
            <person name="Garnier T."/>
            <person name="Eiglmeier K."/>
            <person name="Camus J.-C."/>
            <person name="Medina N."/>
            <person name="Mansoor H."/>
            <person name="Pryor M."/>
            <person name="Duthoy S."/>
            <person name="Grondin S."/>
            <person name="Lacroix C."/>
            <person name="Monsempe C."/>
            <person name="Simon S."/>
            <person name="Harris B."/>
            <person name="Atkin R."/>
            <person name="Doggett J."/>
            <person name="Mayes R."/>
            <person name="Keating L."/>
            <person name="Wheeler P.R."/>
            <person name="Parkhill J."/>
            <person name="Barrell B.G."/>
            <person name="Cole S.T."/>
            <person name="Gordon S.V."/>
            <person name="Hewinson R.G."/>
        </authorList>
    </citation>
    <scope>NUCLEOTIDE SEQUENCE [LARGE SCALE GENOMIC DNA]</scope>
    <source>
        <strain>ATCC BAA-935 / AF2122/97</strain>
    </source>
</reference>
<reference key="2">
    <citation type="journal article" date="2017" name="Genome Announc.">
        <title>Updated reference genome sequence and annotation of Mycobacterium bovis AF2122/97.</title>
        <authorList>
            <person name="Malone K.M."/>
            <person name="Farrell D."/>
            <person name="Stuber T.P."/>
            <person name="Schubert O.T."/>
            <person name="Aebersold R."/>
            <person name="Robbe-Austerman S."/>
            <person name="Gordon S.V."/>
        </authorList>
    </citation>
    <scope>NUCLEOTIDE SEQUENCE [LARGE SCALE GENOMIC DNA]</scope>
    <scope>GENOME REANNOTATION</scope>
    <source>
        <strain>ATCC BAA-935 / AF2122/97</strain>
    </source>
</reference>
<name>CMAS2_MYCBO</name>
<accession>P0A5P1</accession>
<accession>A0A1R3XVJ6</accession>
<accession>Q11196</accession>
<accession>X2BFA2</accession>
<proteinExistence type="inferred from homology"/>